<keyword id="KW-0002">3D-structure</keyword>
<keyword id="KW-0067">ATP-binding</keyword>
<keyword id="KW-0143">Chaperone</keyword>
<keyword id="KW-0175">Coiled coil</keyword>
<keyword id="KW-0963">Cytoplasm</keyword>
<keyword id="KW-0547">Nucleotide-binding</keyword>
<keyword id="KW-1185">Reference proteome</keyword>
<keyword id="KW-0677">Repeat</keyword>
<keyword id="KW-0346">Stress response</keyword>
<organism>
    <name type="scientific">Mycobacterium tuberculosis (strain ATCC 25618 / H37Rv)</name>
    <dbReference type="NCBI Taxonomy" id="83332"/>
    <lineage>
        <taxon>Bacteria</taxon>
        <taxon>Bacillati</taxon>
        <taxon>Actinomycetota</taxon>
        <taxon>Actinomycetes</taxon>
        <taxon>Mycobacteriales</taxon>
        <taxon>Mycobacteriaceae</taxon>
        <taxon>Mycobacterium</taxon>
        <taxon>Mycobacterium tuberculosis complex</taxon>
    </lineage>
</organism>
<gene>
    <name type="primary">clpB</name>
    <name type="ordered locus">Rv0384c</name>
    <name type="ORF">MTV036.19c</name>
</gene>
<feature type="chain" id="PRO_0000191146" description="Chaperone protein ClpB">
    <location>
        <begin position="1"/>
        <end position="848"/>
    </location>
</feature>
<feature type="domain" description="Clp R" evidence="2">
    <location>
        <begin position="1"/>
        <end position="146"/>
    </location>
</feature>
<feature type="region of interest" description="Repeat 1" evidence="2">
    <location>
        <begin position="6"/>
        <end position="71"/>
    </location>
</feature>
<feature type="region of interest" description="Repeat 2" evidence="2">
    <location>
        <begin position="83"/>
        <end position="146"/>
    </location>
</feature>
<feature type="region of interest" description="NBD1" evidence="1">
    <location>
        <begin position="159"/>
        <end position="341"/>
    </location>
</feature>
<feature type="region of interest" description="Linker" evidence="1">
    <location>
        <begin position="342"/>
        <end position="547"/>
    </location>
</feature>
<feature type="region of interest" description="NBD2" evidence="1">
    <location>
        <begin position="557"/>
        <end position="755"/>
    </location>
</feature>
<feature type="region of interest" description="C-terminal" evidence="1">
    <location>
        <begin position="756"/>
        <end position="848"/>
    </location>
</feature>
<feature type="coiled-coil region" evidence="1">
    <location>
        <begin position="392"/>
        <end position="524"/>
    </location>
</feature>
<feature type="binding site" evidence="1">
    <location>
        <begin position="206"/>
        <end position="213"/>
    </location>
    <ligand>
        <name>ATP</name>
        <dbReference type="ChEBI" id="CHEBI:30616"/>
        <label>1</label>
    </ligand>
</feature>
<feature type="binding site" evidence="1">
    <location>
        <begin position="607"/>
        <end position="614"/>
    </location>
    <ligand>
        <name>ATP</name>
        <dbReference type="ChEBI" id="CHEBI:30616"/>
        <label>2</label>
    </ligand>
</feature>
<feature type="helix" evidence="7">
    <location>
        <begin position="8"/>
        <end position="22"/>
    </location>
</feature>
<feature type="turn" evidence="7">
    <location>
        <begin position="23"/>
        <end position="25"/>
    </location>
</feature>
<feature type="strand" evidence="7">
    <location>
        <begin position="27"/>
        <end position="29"/>
    </location>
</feature>
<feature type="helix" evidence="7">
    <location>
        <begin position="31"/>
        <end position="39"/>
    </location>
</feature>
<feature type="helix" evidence="7">
    <location>
        <begin position="47"/>
        <end position="52"/>
    </location>
</feature>
<feature type="strand" evidence="7">
    <location>
        <begin position="57"/>
        <end position="59"/>
    </location>
</feature>
<feature type="turn" evidence="7">
    <location>
        <begin position="60"/>
        <end position="64"/>
    </location>
</feature>
<feature type="helix" evidence="7">
    <location>
        <begin position="65"/>
        <end position="67"/>
    </location>
</feature>
<feature type="turn" evidence="7">
    <location>
        <begin position="68"/>
        <end position="70"/>
    </location>
</feature>
<feature type="helix" evidence="7">
    <location>
        <begin position="85"/>
        <end position="97"/>
    </location>
</feature>
<feature type="turn" evidence="7">
    <location>
        <begin position="98"/>
        <end position="102"/>
    </location>
</feature>
<feature type="helix" evidence="7">
    <location>
        <begin position="108"/>
        <end position="118"/>
    </location>
</feature>
<feature type="helix" evidence="7">
    <location>
        <begin position="120"/>
        <end position="129"/>
    </location>
</feature>
<feature type="helix" evidence="7">
    <location>
        <begin position="133"/>
        <end position="136"/>
    </location>
</feature>
<feature type="helix" evidence="7">
    <location>
        <begin position="141"/>
        <end position="144"/>
    </location>
</feature>
<feature type="helix" evidence="5">
    <location>
        <begin position="160"/>
        <end position="164"/>
    </location>
</feature>
<feature type="strand" evidence="5">
    <location>
        <begin position="165"/>
        <end position="168"/>
    </location>
</feature>
<feature type="helix" evidence="5">
    <location>
        <begin position="169"/>
        <end position="173"/>
    </location>
</feature>
<feature type="helix" evidence="5">
    <location>
        <begin position="184"/>
        <end position="194"/>
    </location>
</feature>
<feature type="strand" evidence="6">
    <location>
        <begin position="197"/>
        <end position="199"/>
    </location>
</feature>
<feature type="strand" evidence="5">
    <location>
        <begin position="202"/>
        <end position="206"/>
    </location>
</feature>
<feature type="helix" evidence="5">
    <location>
        <begin position="213"/>
        <end position="225"/>
    </location>
</feature>
<feature type="helix" evidence="5">
    <location>
        <begin position="230"/>
        <end position="232"/>
    </location>
</feature>
<feature type="strand" evidence="7">
    <location>
        <begin position="237"/>
        <end position="239"/>
    </location>
</feature>
<feature type="helix" evidence="5">
    <location>
        <begin position="242"/>
        <end position="245"/>
    </location>
</feature>
<feature type="strand" evidence="5">
    <location>
        <begin position="246"/>
        <end position="248"/>
    </location>
</feature>
<feature type="strand" evidence="6">
    <location>
        <begin position="251"/>
        <end position="253"/>
    </location>
</feature>
<feature type="helix" evidence="5">
    <location>
        <begin position="255"/>
        <end position="268"/>
    </location>
</feature>
<feature type="strand" evidence="7">
    <location>
        <begin position="269"/>
        <end position="271"/>
    </location>
</feature>
<feature type="strand" evidence="5">
    <location>
        <begin position="275"/>
        <end position="279"/>
    </location>
</feature>
<feature type="helix" evidence="5">
    <location>
        <begin position="280"/>
        <end position="282"/>
    </location>
</feature>
<feature type="helix" evidence="5">
    <location>
        <begin position="301"/>
        <end position="305"/>
    </location>
</feature>
<feature type="strand" evidence="5">
    <location>
        <begin position="312"/>
        <end position="316"/>
    </location>
</feature>
<feature type="helix" evidence="5">
    <location>
        <begin position="317"/>
        <end position="323"/>
    </location>
</feature>
<feature type="turn" evidence="5">
    <location>
        <begin position="324"/>
        <end position="326"/>
    </location>
</feature>
<feature type="helix" evidence="5">
    <location>
        <begin position="328"/>
        <end position="331"/>
    </location>
</feature>
<feature type="strand" evidence="5">
    <location>
        <begin position="335"/>
        <end position="338"/>
    </location>
</feature>
<feature type="helix" evidence="5">
    <location>
        <begin position="344"/>
        <end position="361"/>
    </location>
</feature>
<feature type="helix" evidence="5">
    <location>
        <begin position="368"/>
        <end position="380"/>
    </location>
</feature>
<feature type="helix" evidence="5">
    <location>
        <begin position="387"/>
        <end position="390"/>
    </location>
</feature>
<feature type="helix" evidence="5">
    <location>
        <begin position="392"/>
        <end position="406"/>
    </location>
</feature>
<feature type="strand" evidence="5">
    <location>
        <begin position="407"/>
        <end position="409"/>
    </location>
</feature>
<feature type="turn" evidence="5">
    <location>
        <begin position="411"/>
        <end position="415"/>
    </location>
</feature>
<feature type="helix" evidence="5">
    <location>
        <begin position="416"/>
        <end position="427"/>
    </location>
</feature>
<feature type="strand" evidence="5">
    <location>
        <begin position="430"/>
        <end position="432"/>
    </location>
</feature>
<feature type="helix" evidence="5">
    <location>
        <begin position="438"/>
        <end position="468"/>
    </location>
</feature>
<feature type="helix" evidence="6">
    <location>
        <begin position="470"/>
        <end position="476"/>
    </location>
</feature>
<feature type="helix" evidence="5">
    <location>
        <begin position="537"/>
        <end position="544"/>
    </location>
</feature>
<feature type="strand" evidence="6">
    <location>
        <begin position="545"/>
        <end position="547"/>
    </location>
</feature>
<feature type="helix" evidence="5">
    <location>
        <begin position="557"/>
        <end position="568"/>
    </location>
</feature>
<feature type="turn" evidence="5">
    <location>
        <begin position="569"/>
        <end position="571"/>
    </location>
</feature>
<feature type="helix" evidence="5">
    <location>
        <begin position="576"/>
        <end position="590"/>
    </location>
</feature>
<feature type="strand" evidence="5">
    <location>
        <begin position="596"/>
        <end position="598"/>
    </location>
</feature>
<feature type="strand" evidence="5">
    <location>
        <begin position="602"/>
        <end position="606"/>
    </location>
</feature>
<feature type="strand" evidence="5">
    <location>
        <begin position="608"/>
        <end position="612"/>
    </location>
</feature>
<feature type="helix" evidence="5">
    <location>
        <begin position="615"/>
        <end position="623"/>
    </location>
</feature>
<feature type="strand" evidence="5">
    <location>
        <begin position="624"/>
        <end position="626"/>
    </location>
</feature>
<feature type="helix" evidence="6">
    <location>
        <begin position="628"/>
        <end position="630"/>
    </location>
</feature>
<feature type="strand" evidence="5">
    <location>
        <begin position="631"/>
        <end position="635"/>
    </location>
</feature>
<feature type="helix" evidence="5">
    <location>
        <begin position="636"/>
        <end position="638"/>
    </location>
</feature>
<feature type="helix" evidence="5">
    <location>
        <begin position="643"/>
        <end position="647"/>
    </location>
</feature>
<feature type="strand" evidence="5">
    <location>
        <begin position="655"/>
        <end position="657"/>
    </location>
</feature>
<feature type="helix" evidence="5">
    <location>
        <begin position="665"/>
        <end position="668"/>
    </location>
</feature>
<feature type="strand" evidence="5">
    <location>
        <begin position="669"/>
        <end position="671"/>
    </location>
</feature>
<feature type="strand" evidence="5">
    <location>
        <begin position="675"/>
        <end position="680"/>
    </location>
</feature>
<feature type="helix" evidence="5">
    <location>
        <begin position="681"/>
        <end position="683"/>
    </location>
</feature>
<feature type="helix" evidence="5">
    <location>
        <begin position="689"/>
        <end position="695"/>
    </location>
</feature>
<feature type="turn" evidence="5">
    <location>
        <begin position="696"/>
        <end position="698"/>
    </location>
</feature>
<feature type="strand" evidence="5">
    <location>
        <begin position="700"/>
        <end position="702"/>
    </location>
</feature>
<feature type="strand" evidence="5">
    <location>
        <begin position="704"/>
        <end position="706"/>
    </location>
</feature>
<feature type="strand" evidence="5">
    <location>
        <begin position="708"/>
        <end position="710"/>
    </location>
</feature>
<feature type="strand" evidence="5">
    <location>
        <begin position="715"/>
        <end position="720"/>
    </location>
</feature>
<feature type="strand" evidence="5">
    <location>
        <begin position="722"/>
        <end position="725"/>
    </location>
</feature>
<feature type="strand" evidence="5">
    <location>
        <begin position="727"/>
        <end position="729"/>
    </location>
</feature>
<feature type="helix" evidence="5">
    <location>
        <begin position="730"/>
        <end position="738"/>
    </location>
</feature>
<feature type="helix" evidence="5">
    <location>
        <begin position="741"/>
        <end position="744"/>
    </location>
</feature>
<feature type="helix" evidence="7">
    <location>
        <begin position="758"/>
        <end position="761"/>
    </location>
</feature>
<feature type="helix" evidence="5">
    <location>
        <begin position="762"/>
        <end position="775"/>
    </location>
</feature>
<feature type="turn" evidence="5">
    <location>
        <begin position="776"/>
        <end position="780"/>
    </location>
</feature>
<feature type="strand" evidence="5">
    <location>
        <begin position="783"/>
        <end position="785"/>
    </location>
</feature>
<feature type="helix" evidence="5">
    <location>
        <begin position="787"/>
        <end position="796"/>
    </location>
</feature>
<feature type="turn" evidence="6">
    <location>
        <begin position="800"/>
        <end position="802"/>
    </location>
</feature>
<feature type="helix" evidence="5">
    <location>
        <begin position="805"/>
        <end position="823"/>
    </location>
</feature>
<feature type="strand" evidence="5">
    <location>
        <begin position="826"/>
        <end position="828"/>
    </location>
</feature>
<feature type="strand" evidence="5">
    <location>
        <begin position="834"/>
        <end position="838"/>
    </location>
</feature>
<feature type="strand" evidence="5">
    <location>
        <begin position="840"/>
        <end position="844"/>
    </location>
</feature>
<accession>P9WPD1</accession>
<accession>L0T577</accession>
<accession>O53719</accession>
<accession>P63288</accession>
<name>CLPB_MYCTU</name>
<reference key="1">
    <citation type="journal article" date="1998" name="Nature">
        <title>Deciphering the biology of Mycobacterium tuberculosis from the complete genome sequence.</title>
        <authorList>
            <person name="Cole S.T."/>
            <person name="Brosch R."/>
            <person name="Parkhill J."/>
            <person name="Garnier T."/>
            <person name="Churcher C.M."/>
            <person name="Harris D.E."/>
            <person name="Gordon S.V."/>
            <person name="Eiglmeier K."/>
            <person name="Gas S."/>
            <person name="Barry C.E. III"/>
            <person name="Tekaia F."/>
            <person name="Badcock K."/>
            <person name="Basham D."/>
            <person name="Brown D."/>
            <person name="Chillingworth T."/>
            <person name="Connor R."/>
            <person name="Davies R.M."/>
            <person name="Devlin K."/>
            <person name="Feltwell T."/>
            <person name="Gentles S."/>
            <person name="Hamlin N."/>
            <person name="Holroyd S."/>
            <person name="Hornsby T."/>
            <person name="Jagels K."/>
            <person name="Krogh A."/>
            <person name="McLean J."/>
            <person name="Moule S."/>
            <person name="Murphy L.D."/>
            <person name="Oliver S."/>
            <person name="Osborne J."/>
            <person name="Quail M.A."/>
            <person name="Rajandream M.A."/>
            <person name="Rogers J."/>
            <person name="Rutter S."/>
            <person name="Seeger K."/>
            <person name="Skelton S."/>
            <person name="Squares S."/>
            <person name="Squares R."/>
            <person name="Sulston J.E."/>
            <person name="Taylor K."/>
            <person name="Whitehead S."/>
            <person name="Barrell B.G."/>
        </authorList>
    </citation>
    <scope>NUCLEOTIDE SEQUENCE [LARGE SCALE GENOMIC DNA]</scope>
    <source>
        <strain>ATCC 25618 / H37Rv</strain>
    </source>
</reference>
<reference key="2">
    <citation type="journal article" date="2001" name="J. Bacteriol.">
        <title>The alternative sigma factor SigH regulates major components of oxidative and heat stress responses in Mycobacterium tuberculosis.</title>
        <authorList>
            <person name="Raman S."/>
            <person name="Song T."/>
            <person name="Puyang X."/>
            <person name="Bardarov S."/>
            <person name="Jacobs W.R. Jr."/>
            <person name="Husson R.N."/>
        </authorList>
    </citation>
    <scope>INDUCTION BY SIGH</scope>
    <source>
        <strain>ATCC 25618 / H37Rv</strain>
    </source>
</reference>
<reference key="3">
    <citation type="journal article" date="2011" name="Mol. Cell. Proteomics">
        <title>Proteogenomic analysis of Mycobacterium tuberculosis by high resolution mass spectrometry.</title>
        <authorList>
            <person name="Kelkar D.S."/>
            <person name="Kumar D."/>
            <person name="Kumar P."/>
            <person name="Balakrishnan L."/>
            <person name="Muthusamy B."/>
            <person name="Yadav A.K."/>
            <person name="Shrivastava P."/>
            <person name="Marimuthu A."/>
            <person name="Anand S."/>
            <person name="Sundaram H."/>
            <person name="Kingsbury R."/>
            <person name="Harsha H.C."/>
            <person name="Nair B."/>
            <person name="Prasad T.S."/>
            <person name="Chauhan D.S."/>
            <person name="Katoch K."/>
            <person name="Katoch V.M."/>
            <person name="Kumar P."/>
            <person name="Chaerkady R."/>
            <person name="Ramachandran S."/>
            <person name="Dash D."/>
            <person name="Pandey A."/>
        </authorList>
    </citation>
    <scope>IDENTIFICATION BY MASS SPECTROMETRY [LARGE SCALE ANALYSIS]</scope>
    <source>
        <strain>ATCC 25618 / H37Rv</strain>
    </source>
</reference>
<sequence>MDSFNPTTKTQAALTAALQAASTAGNPEIRPAHLLMALLTQNDGIAAPLLEAVGVEPATVRAETQRLLDRLPQATGASTQPQLSRESLAAITTAQQLATELDDEYVSTEHVMVGLATGDSDVAKLLTGHGASPQALREAFVKVRGSARVTSPEPEATYQALQKYSTDLTARAREGKLDPVIGRDNEIRRVVQVLSRRTKNNPVLIGEPGVGKTAIVEGLAQRIVAGDVPESLRDKTIVALDLGSMVAGSKYRGEFEERLKAVLDDIKNSAGQIITFIDELHTIVGAGATGEGAMDAGNMIKPMLARGELRLVGATTLDEYRKHIEKDAALERRFQQVYVGEPSVEDTIGILRGLKDRYEVHHGVRITDSALVAAATLSDRYITARFLPDKAIDLVDEAASRLRMEIDSRPVEIDEVERLVRRLEIEEMALSKEEDEASAERLAKLRSELADQKEKLAELTTRWQNEKNAIEIVRDLKEQLEALRGESERAERDGDLAKAAELRYGRIPEVEKKLDAALPQAQAREQVMLKEEVGPDDIADVVSAWTGIPAGRLLEGETAKLLRMEDELGKRVIGQKAAVTAVSDAVRRSRAGVSDPNRPTGAFMFLGPTGVGKTELAKALADFLFDDERAMVRIDMSEYGEKHTVARLIGAPPGYVGYEAGGQLTEAVRRRPYTVVLFDEIEKAHPDVFDVLLQVLDEGRLTDGHGRTVDFRNTILILTSNLGSGGSAEQVLAAVRATFKPEFINRLDDVLIFEGLNPEELVRIVDIQLAQLGKRLAQRRLQLQVSLPAKRWLAQRGFDPVYGARPLRRLVQQAIGDQLAKMLLAGQVHDGDTVPVNVSPDADSLILG</sequence>
<evidence type="ECO:0000250" key="1"/>
<evidence type="ECO:0000255" key="2">
    <source>
        <dbReference type="PROSITE-ProRule" id="PRU01251"/>
    </source>
</evidence>
<evidence type="ECO:0000269" key="3">
    <source>
    </source>
</evidence>
<evidence type="ECO:0000305" key="4"/>
<evidence type="ECO:0007829" key="5">
    <source>
        <dbReference type="PDB" id="6W6G"/>
    </source>
</evidence>
<evidence type="ECO:0007829" key="6">
    <source>
        <dbReference type="PDB" id="6W6H"/>
    </source>
</evidence>
<evidence type="ECO:0007829" key="7">
    <source>
        <dbReference type="PDB" id="6W6J"/>
    </source>
</evidence>
<protein>
    <recommendedName>
        <fullName>Chaperone protein ClpB</fullName>
    </recommendedName>
</protein>
<dbReference type="EMBL" id="AL123456">
    <property type="protein sequence ID" value="CCP43114.1"/>
    <property type="molecule type" value="Genomic_DNA"/>
</dbReference>
<dbReference type="PIR" id="C70834">
    <property type="entry name" value="C70834"/>
</dbReference>
<dbReference type="RefSeq" id="NP_214898.1">
    <property type="nucleotide sequence ID" value="NC_000962.3"/>
</dbReference>
<dbReference type="RefSeq" id="WP_003401905.1">
    <property type="nucleotide sequence ID" value="NZ_NVQJ01000002.1"/>
</dbReference>
<dbReference type="PDB" id="6DJU">
    <property type="method" value="EM"/>
    <property type="resolution" value="3.80 A"/>
    <property type="chains" value="A/B/C/D/E/F=1-848"/>
</dbReference>
<dbReference type="PDB" id="6DJV">
    <property type="method" value="EM"/>
    <property type="resolution" value="3.90 A"/>
    <property type="chains" value="A/B/C/D/E/F=1-848"/>
</dbReference>
<dbReference type="PDB" id="6ED3">
    <property type="method" value="EM"/>
    <property type="resolution" value="6.30 A"/>
    <property type="chains" value="A/B/C/D/E/F=1-848"/>
</dbReference>
<dbReference type="PDB" id="6W6E">
    <property type="method" value="EM"/>
    <property type="resolution" value="3.70 A"/>
    <property type="chains" value="A/B/C/D/E/F=1-848"/>
</dbReference>
<dbReference type="PDB" id="6W6G">
    <property type="method" value="EM"/>
    <property type="resolution" value="3.10 A"/>
    <property type="chains" value="A/B/C/D/E/F=1-848"/>
</dbReference>
<dbReference type="PDB" id="6W6H">
    <property type="method" value="EM"/>
    <property type="resolution" value="3.30 A"/>
    <property type="chains" value="A/B/C/D/E/F=1-848"/>
</dbReference>
<dbReference type="PDB" id="6W6I">
    <property type="method" value="EM"/>
    <property type="resolution" value="3.50 A"/>
    <property type="chains" value="A/B/C/D/E/F=1-848"/>
</dbReference>
<dbReference type="PDB" id="6W6J">
    <property type="method" value="EM"/>
    <property type="resolution" value="3.20 A"/>
    <property type="chains" value="A/B/C/D/E/F=1-848"/>
</dbReference>
<dbReference type="PDB" id="7L6N">
    <property type="method" value="EM"/>
    <property type="resolution" value="7.00 A"/>
    <property type="chains" value="A/B/C/D/E/F=1-848"/>
</dbReference>
<dbReference type="PDBsum" id="6DJU"/>
<dbReference type="PDBsum" id="6DJV"/>
<dbReference type="PDBsum" id="6ED3"/>
<dbReference type="PDBsum" id="6W6E"/>
<dbReference type="PDBsum" id="6W6G"/>
<dbReference type="PDBsum" id="6W6H"/>
<dbReference type="PDBsum" id="6W6I"/>
<dbReference type="PDBsum" id="6W6J"/>
<dbReference type="PDBsum" id="7L6N"/>
<dbReference type="SMR" id="P9WPD1"/>
<dbReference type="FunCoup" id="P9WPD1">
    <property type="interactions" value="257"/>
</dbReference>
<dbReference type="STRING" id="83332.Rv0384c"/>
<dbReference type="PaxDb" id="83332-Rv0384c"/>
<dbReference type="DNASU" id="886440"/>
<dbReference type="GeneID" id="886440"/>
<dbReference type="KEGG" id="mtu:Rv0384c"/>
<dbReference type="KEGG" id="mtv:RVBD_0384c"/>
<dbReference type="TubercuList" id="Rv0384c"/>
<dbReference type="eggNOG" id="COG0542">
    <property type="taxonomic scope" value="Bacteria"/>
</dbReference>
<dbReference type="InParanoid" id="P9WPD1"/>
<dbReference type="OrthoDB" id="9803641at2"/>
<dbReference type="PhylomeDB" id="P9WPD1"/>
<dbReference type="BioCyc" id="MetaCyc:G185E-4508-MONOMER"/>
<dbReference type="PHI-base" id="PHI:9919"/>
<dbReference type="Proteomes" id="UP000001584">
    <property type="component" value="Chromosome"/>
</dbReference>
<dbReference type="GO" id="GO:0005737">
    <property type="term" value="C:cytoplasm"/>
    <property type="evidence" value="ECO:0000318"/>
    <property type="project" value="GO_Central"/>
</dbReference>
<dbReference type="GO" id="GO:0009274">
    <property type="term" value="C:peptidoglycan-based cell wall"/>
    <property type="evidence" value="ECO:0007005"/>
    <property type="project" value="MTBBASE"/>
</dbReference>
<dbReference type="GO" id="GO:0005886">
    <property type="term" value="C:plasma membrane"/>
    <property type="evidence" value="ECO:0007005"/>
    <property type="project" value="MTBBASE"/>
</dbReference>
<dbReference type="GO" id="GO:0005524">
    <property type="term" value="F:ATP binding"/>
    <property type="evidence" value="ECO:0007669"/>
    <property type="project" value="UniProtKB-KW"/>
</dbReference>
<dbReference type="GO" id="GO:0016887">
    <property type="term" value="F:ATP hydrolysis activity"/>
    <property type="evidence" value="ECO:0000318"/>
    <property type="project" value="GO_Central"/>
</dbReference>
<dbReference type="GO" id="GO:0034605">
    <property type="term" value="P:cellular response to heat"/>
    <property type="evidence" value="ECO:0000318"/>
    <property type="project" value="GO_Central"/>
</dbReference>
<dbReference type="GO" id="GO:0042026">
    <property type="term" value="P:protein refolding"/>
    <property type="evidence" value="ECO:0007669"/>
    <property type="project" value="InterPro"/>
</dbReference>
<dbReference type="CDD" id="cd00009">
    <property type="entry name" value="AAA"/>
    <property type="match status" value="1"/>
</dbReference>
<dbReference type="CDD" id="cd19499">
    <property type="entry name" value="RecA-like_ClpB_Hsp104-like"/>
    <property type="match status" value="1"/>
</dbReference>
<dbReference type="FunFam" id="1.10.8.60:FF:000017">
    <property type="entry name" value="ATP-dependent chaperone ClpB"/>
    <property type="match status" value="1"/>
</dbReference>
<dbReference type="FunFam" id="3.40.50.300:FF:000120">
    <property type="entry name" value="ATP-dependent chaperone ClpB"/>
    <property type="match status" value="1"/>
</dbReference>
<dbReference type="FunFam" id="3.40.50.300:FF:000025">
    <property type="entry name" value="ATP-dependent Clp protease subunit"/>
    <property type="match status" value="1"/>
</dbReference>
<dbReference type="FunFam" id="3.40.50.300:FF:000010">
    <property type="entry name" value="Chaperone clpB 1, putative"/>
    <property type="match status" value="1"/>
</dbReference>
<dbReference type="FunFam" id="1.10.1780.10:FF:000007">
    <property type="entry name" value="Chaperone protein ClpB"/>
    <property type="match status" value="1"/>
</dbReference>
<dbReference type="Gene3D" id="1.10.8.60">
    <property type="match status" value="1"/>
</dbReference>
<dbReference type="Gene3D" id="1.10.1780.10">
    <property type="entry name" value="Clp, N-terminal domain"/>
    <property type="match status" value="1"/>
</dbReference>
<dbReference type="Gene3D" id="3.40.50.300">
    <property type="entry name" value="P-loop containing nucleotide triphosphate hydrolases"/>
    <property type="match status" value="3"/>
</dbReference>
<dbReference type="InterPro" id="IPR003593">
    <property type="entry name" value="AAA+_ATPase"/>
</dbReference>
<dbReference type="InterPro" id="IPR003959">
    <property type="entry name" value="ATPase_AAA_core"/>
</dbReference>
<dbReference type="InterPro" id="IPR017730">
    <property type="entry name" value="Chaperonin_ClpB"/>
</dbReference>
<dbReference type="InterPro" id="IPR019489">
    <property type="entry name" value="Clp_ATPase_C"/>
</dbReference>
<dbReference type="InterPro" id="IPR036628">
    <property type="entry name" value="Clp_N_dom_sf"/>
</dbReference>
<dbReference type="InterPro" id="IPR004176">
    <property type="entry name" value="Clp_R_dom"/>
</dbReference>
<dbReference type="InterPro" id="IPR001270">
    <property type="entry name" value="ClpA/B"/>
</dbReference>
<dbReference type="InterPro" id="IPR018368">
    <property type="entry name" value="ClpA/B_CS1"/>
</dbReference>
<dbReference type="InterPro" id="IPR028299">
    <property type="entry name" value="ClpA/B_CS2"/>
</dbReference>
<dbReference type="InterPro" id="IPR041546">
    <property type="entry name" value="ClpA/ClpB_AAA_lid"/>
</dbReference>
<dbReference type="InterPro" id="IPR050130">
    <property type="entry name" value="ClpA_ClpB"/>
</dbReference>
<dbReference type="InterPro" id="IPR027417">
    <property type="entry name" value="P-loop_NTPase"/>
</dbReference>
<dbReference type="NCBIfam" id="TIGR03346">
    <property type="entry name" value="chaperone_ClpB"/>
    <property type="match status" value="1"/>
</dbReference>
<dbReference type="PANTHER" id="PTHR11638">
    <property type="entry name" value="ATP-DEPENDENT CLP PROTEASE"/>
    <property type="match status" value="1"/>
</dbReference>
<dbReference type="PANTHER" id="PTHR11638:SF18">
    <property type="entry name" value="HEAT SHOCK PROTEIN 104"/>
    <property type="match status" value="1"/>
</dbReference>
<dbReference type="Pfam" id="PF00004">
    <property type="entry name" value="AAA"/>
    <property type="match status" value="1"/>
</dbReference>
<dbReference type="Pfam" id="PF07724">
    <property type="entry name" value="AAA_2"/>
    <property type="match status" value="1"/>
</dbReference>
<dbReference type="Pfam" id="PF17871">
    <property type="entry name" value="AAA_lid_9"/>
    <property type="match status" value="1"/>
</dbReference>
<dbReference type="Pfam" id="PF02861">
    <property type="entry name" value="Clp_N"/>
    <property type="match status" value="2"/>
</dbReference>
<dbReference type="Pfam" id="PF10431">
    <property type="entry name" value="ClpB_D2-small"/>
    <property type="match status" value="1"/>
</dbReference>
<dbReference type="PRINTS" id="PR00300">
    <property type="entry name" value="CLPPROTEASEA"/>
</dbReference>
<dbReference type="SMART" id="SM00382">
    <property type="entry name" value="AAA"/>
    <property type="match status" value="2"/>
</dbReference>
<dbReference type="SMART" id="SM01086">
    <property type="entry name" value="ClpB_D2-small"/>
    <property type="match status" value="1"/>
</dbReference>
<dbReference type="SUPFAM" id="SSF81923">
    <property type="entry name" value="Double Clp-N motif"/>
    <property type="match status" value="1"/>
</dbReference>
<dbReference type="SUPFAM" id="SSF52540">
    <property type="entry name" value="P-loop containing nucleoside triphosphate hydrolases"/>
    <property type="match status" value="2"/>
</dbReference>
<dbReference type="PROSITE" id="PS51903">
    <property type="entry name" value="CLP_R"/>
    <property type="match status" value="1"/>
</dbReference>
<dbReference type="PROSITE" id="PS00870">
    <property type="entry name" value="CLPAB_1"/>
    <property type="match status" value="1"/>
</dbReference>
<dbReference type="PROSITE" id="PS00871">
    <property type="entry name" value="CLPAB_2"/>
    <property type="match status" value="1"/>
</dbReference>
<comment type="function">
    <text evidence="1">Part of a stress-induced multi-chaperone system, it is involved in the recovery of the cell from heat-induced damage, in cooperation with DnaK, DnaJ and GrpE. Acts before DnaK, in the processing of protein aggregates. Protein binding stimulates the ATPase activity; ATP hydrolysis unfolds the denatured protein aggregates, which probably helps expose new hydrophobic binding sites on the surface of ClpB-bound aggregates, contributing to the solubilization and refolding of denatured protein aggregates by DnaK (By similarity).</text>
</comment>
<comment type="subunit">
    <text evidence="1">Homohexamer. The oligomerization is ATP-dependent (By similarity).</text>
</comment>
<comment type="subcellular location">
    <subcellularLocation>
        <location evidence="4">Cytoplasm</location>
    </subcellularLocation>
</comment>
<comment type="induction">
    <text evidence="3">Expressed following heat shock under control of SigH. There is another promoter.</text>
</comment>
<comment type="domain">
    <text evidence="1">The Clp repeat (R) domain probably functions as a substrate-discriminating domain, recruiting aggregated proteins to the ClpB hexamer and/or stabilizing bound proteins. The NBD2 domain is responsible for oligomerization, whereas the NBD1 domain stabilizes the hexamer probably in an ATP-dependent manner. The movement of the coiled-coil domain is essential for ClpB ability to rescue proteins from an aggregated state, probably by pulling apart large aggregated proteins, which are bound between the coiled-coils motifs of adjacent ClpB subunits in the functional hexamer (By similarity).</text>
</comment>
<comment type="similarity">
    <text evidence="4">Belongs to the ClpA/ClpB family.</text>
</comment>
<proteinExistence type="evidence at protein level"/>